<protein>
    <recommendedName>
        <fullName evidence="1">Ribosomal protein L11 methyltransferase</fullName>
        <shortName evidence="1">L11 Mtase</shortName>
        <ecNumber evidence="1">2.1.1.-</ecNumber>
    </recommendedName>
</protein>
<comment type="function">
    <text evidence="1">Methylates ribosomal protein L11.</text>
</comment>
<comment type="catalytic activity">
    <reaction evidence="1">
        <text>L-lysyl-[protein] + 3 S-adenosyl-L-methionine = N(6),N(6),N(6)-trimethyl-L-lysyl-[protein] + 3 S-adenosyl-L-homocysteine + 3 H(+)</text>
        <dbReference type="Rhea" id="RHEA:54192"/>
        <dbReference type="Rhea" id="RHEA-COMP:9752"/>
        <dbReference type="Rhea" id="RHEA-COMP:13826"/>
        <dbReference type="ChEBI" id="CHEBI:15378"/>
        <dbReference type="ChEBI" id="CHEBI:29969"/>
        <dbReference type="ChEBI" id="CHEBI:57856"/>
        <dbReference type="ChEBI" id="CHEBI:59789"/>
        <dbReference type="ChEBI" id="CHEBI:61961"/>
    </reaction>
</comment>
<comment type="subcellular location">
    <subcellularLocation>
        <location evidence="1">Cytoplasm</location>
    </subcellularLocation>
</comment>
<comment type="similarity">
    <text evidence="1">Belongs to the methyltransferase superfamily. PrmA family.</text>
</comment>
<accession>Q32B79</accession>
<organism>
    <name type="scientific">Shigella dysenteriae serotype 1 (strain Sd197)</name>
    <dbReference type="NCBI Taxonomy" id="300267"/>
    <lineage>
        <taxon>Bacteria</taxon>
        <taxon>Pseudomonadati</taxon>
        <taxon>Pseudomonadota</taxon>
        <taxon>Gammaproteobacteria</taxon>
        <taxon>Enterobacterales</taxon>
        <taxon>Enterobacteriaceae</taxon>
        <taxon>Shigella</taxon>
    </lineage>
</organism>
<gene>
    <name evidence="1" type="primary">prmA</name>
    <name type="ordered locus">SDY_3436</name>
</gene>
<feature type="chain" id="PRO_1000046095" description="Ribosomal protein L11 methyltransferase">
    <location>
        <begin position="1"/>
        <end position="293"/>
    </location>
</feature>
<feature type="binding site" evidence="1">
    <location>
        <position position="145"/>
    </location>
    <ligand>
        <name>S-adenosyl-L-methionine</name>
        <dbReference type="ChEBI" id="CHEBI:59789"/>
    </ligand>
</feature>
<feature type="binding site" evidence="1">
    <location>
        <position position="166"/>
    </location>
    <ligand>
        <name>S-adenosyl-L-methionine</name>
        <dbReference type="ChEBI" id="CHEBI:59789"/>
    </ligand>
</feature>
<feature type="binding site" evidence="1">
    <location>
        <position position="188"/>
    </location>
    <ligand>
        <name>S-adenosyl-L-methionine</name>
        <dbReference type="ChEBI" id="CHEBI:59789"/>
    </ligand>
</feature>
<feature type="binding site" evidence="1">
    <location>
        <position position="230"/>
    </location>
    <ligand>
        <name>S-adenosyl-L-methionine</name>
        <dbReference type="ChEBI" id="CHEBI:59789"/>
    </ligand>
</feature>
<proteinExistence type="inferred from homology"/>
<dbReference type="EC" id="2.1.1.-" evidence="1"/>
<dbReference type="EMBL" id="CP000034">
    <property type="protein sequence ID" value="ABB63426.1"/>
    <property type="molecule type" value="Genomic_DNA"/>
</dbReference>
<dbReference type="RefSeq" id="WP_001145827.1">
    <property type="nucleotide sequence ID" value="NC_007606.1"/>
</dbReference>
<dbReference type="RefSeq" id="YP_404917.1">
    <property type="nucleotide sequence ID" value="NC_007606.1"/>
</dbReference>
<dbReference type="SMR" id="Q32B79"/>
<dbReference type="STRING" id="300267.SDY_3436"/>
<dbReference type="EnsemblBacteria" id="ABB63426">
    <property type="protein sequence ID" value="ABB63426"/>
    <property type="gene ID" value="SDY_3436"/>
</dbReference>
<dbReference type="GeneID" id="75206107"/>
<dbReference type="KEGG" id="sdy:SDY_3436"/>
<dbReference type="PATRIC" id="fig|300267.13.peg.4092"/>
<dbReference type="HOGENOM" id="CLU_049382_4_1_6"/>
<dbReference type="Proteomes" id="UP000002716">
    <property type="component" value="Chromosome"/>
</dbReference>
<dbReference type="GO" id="GO:0005829">
    <property type="term" value="C:cytosol"/>
    <property type="evidence" value="ECO:0007669"/>
    <property type="project" value="TreeGrafter"/>
</dbReference>
<dbReference type="GO" id="GO:0016279">
    <property type="term" value="F:protein-lysine N-methyltransferase activity"/>
    <property type="evidence" value="ECO:0007669"/>
    <property type="project" value="TreeGrafter"/>
</dbReference>
<dbReference type="GO" id="GO:0032259">
    <property type="term" value="P:methylation"/>
    <property type="evidence" value="ECO:0007669"/>
    <property type="project" value="UniProtKB-KW"/>
</dbReference>
<dbReference type="CDD" id="cd02440">
    <property type="entry name" value="AdoMet_MTases"/>
    <property type="match status" value="1"/>
</dbReference>
<dbReference type="FunFam" id="3.40.50.150:FF:000021">
    <property type="entry name" value="Ribosomal protein L11 methyltransferase"/>
    <property type="match status" value="1"/>
</dbReference>
<dbReference type="Gene3D" id="3.40.50.150">
    <property type="entry name" value="Vaccinia Virus protein VP39"/>
    <property type="match status" value="1"/>
</dbReference>
<dbReference type="HAMAP" id="MF_00735">
    <property type="entry name" value="Methyltr_PrmA"/>
    <property type="match status" value="1"/>
</dbReference>
<dbReference type="InterPro" id="IPR050078">
    <property type="entry name" value="Ribosomal_L11_MeTrfase_PrmA"/>
</dbReference>
<dbReference type="InterPro" id="IPR004498">
    <property type="entry name" value="Ribosomal_PrmA_MeTrfase"/>
</dbReference>
<dbReference type="InterPro" id="IPR029063">
    <property type="entry name" value="SAM-dependent_MTases_sf"/>
</dbReference>
<dbReference type="NCBIfam" id="TIGR00406">
    <property type="entry name" value="prmA"/>
    <property type="match status" value="1"/>
</dbReference>
<dbReference type="PANTHER" id="PTHR43648">
    <property type="entry name" value="ELECTRON TRANSFER FLAVOPROTEIN BETA SUBUNIT LYSINE METHYLTRANSFERASE"/>
    <property type="match status" value="1"/>
</dbReference>
<dbReference type="PANTHER" id="PTHR43648:SF1">
    <property type="entry name" value="ELECTRON TRANSFER FLAVOPROTEIN BETA SUBUNIT LYSINE METHYLTRANSFERASE"/>
    <property type="match status" value="1"/>
</dbReference>
<dbReference type="Pfam" id="PF06325">
    <property type="entry name" value="PrmA"/>
    <property type="match status" value="1"/>
</dbReference>
<dbReference type="PIRSF" id="PIRSF000401">
    <property type="entry name" value="RPL11_MTase"/>
    <property type="match status" value="1"/>
</dbReference>
<dbReference type="SUPFAM" id="SSF53335">
    <property type="entry name" value="S-adenosyl-L-methionine-dependent methyltransferases"/>
    <property type="match status" value="1"/>
</dbReference>
<reference key="1">
    <citation type="journal article" date="2005" name="Nucleic Acids Res.">
        <title>Genome dynamics and diversity of Shigella species, the etiologic agents of bacillary dysentery.</title>
        <authorList>
            <person name="Yang F."/>
            <person name="Yang J."/>
            <person name="Zhang X."/>
            <person name="Chen L."/>
            <person name="Jiang Y."/>
            <person name="Yan Y."/>
            <person name="Tang X."/>
            <person name="Wang J."/>
            <person name="Xiong Z."/>
            <person name="Dong J."/>
            <person name="Xue Y."/>
            <person name="Zhu Y."/>
            <person name="Xu X."/>
            <person name="Sun L."/>
            <person name="Chen S."/>
            <person name="Nie H."/>
            <person name="Peng J."/>
            <person name="Xu J."/>
            <person name="Wang Y."/>
            <person name="Yuan Z."/>
            <person name="Wen Y."/>
            <person name="Yao Z."/>
            <person name="Shen Y."/>
            <person name="Qiang B."/>
            <person name="Hou Y."/>
            <person name="Yu J."/>
            <person name="Jin Q."/>
        </authorList>
    </citation>
    <scope>NUCLEOTIDE SEQUENCE [LARGE SCALE GENOMIC DNA]</scope>
    <source>
        <strain>Sd197</strain>
    </source>
</reference>
<name>PRMA_SHIDS</name>
<keyword id="KW-0963">Cytoplasm</keyword>
<keyword id="KW-0489">Methyltransferase</keyword>
<keyword id="KW-1185">Reference proteome</keyword>
<keyword id="KW-0949">S-adenosyl-L-methionine</keyword>
<keyword id="KW-0808">Transferase</keyword>
<evidence type="ECO:0000255" key="1">
    <source>
        <dbReference type="HAMAP-Rule" id="MF_00735"/>
    </source>
</evidence>
<sequence>MPWIQLKLNTTGANAEDLSDALMEAGAVSITFQDTHDTPVFEPLPGETRLWGDTDVIGLFDAETDMNDVVAILENHPLLGAGFAHKIEQLEDKDWEREWMDNFHPMRFGERLWICPSWRDVPDENAVNVMLDPGLAFGTGTHPTTSLCLQWLDSLDLTGKTVIDFGCGSGILAIAALKLGAAKAIGIDIDPQAIQASRDNAERNGVSDRLELYLPKDQPEEMKADVVVANILAGPLRELAPLISVLPVSGGLLGLSGILASQAESVCEAYADSFALDPVVEKEEWCRITGRKN</sequence>